<gene>
    <name type="primary">Ccin</name>
</gene>
<name>CALI_MOUSE</name>
<feature type="chain" id="PRO_0000284432" description="Calicin">
    <location>
        <begin position="1"/>
        <end position="588"/>
    </location>
</feature>
<feature type="domain" description="BTB" evidence="3">
    <location>
        <begin position="28"/>
        <end position="98"/>
    </location>
</feature>
<feature type="domain" description="BACK">
    <location>
        <begin position="133"/>
        <end position="235"/>
    </location>
</feature>
<feature type="repeat" description="Kelch 1">
    <location>
        <begin position="280"/>
        <end position="327"/>
    </location>
</feature>
<feature type="repeat" description="Kelch 2">
    <location>
        <begin position="328"/>
        <end position="375"/>
    </location>
</feature>
<feature type="repeat" description="Kelch 3">
    <location>
        <begin position="377"/>
        <end position="423"/>
    </location>
</feature>
<feature type="repeat" description="Kelch 4">
    <location>
        <begin position="425"/>
        <end position="475"/>
    </location>
</feature>
<feature type="repeat" description="Kelch 5">
    <location>
        <begin position="476"/>
        <end position="525"/>
    </location>
</feature>
<feature type="repeat" description="Kelch 6">
    <location>
        <begin position="526"/>
        <end position="580"/>
    </location>
</feature>
<feature type="modified residue" description="Phosphoserine" evidence="2">
    <location>
        <position position="149"/>
    </location>
</feature>
<feature type="mutagenesis site" description="Knockin homozygous animals develop normally, however males are infertile and their spermatozoa show a substantial decrease in motility; spermatozoa from homozygous males exhibit several abnormalities, including abnormal head shaping, with an increase in their length and width, apical defect of the acrosome, and nuclear lacunae devoid of chromatin, at the flagellum, mutant spermatozoa display mitochondrial sheath misassembly and coiling tail around the nucleus; may severely impair protein stability." evidence="4">
    <original>H</original>
    <variation>L</variation>
    <location>
        <position position="42"/>
    </location>
</feature>
<feature type="mutagenesis site" description="Knockin homozygous animals develop normally, however males are infertile and their spermatozoa show a substantial decrease in motility; spermatozoa from homozygous males exhibit several abnormalities, including abnormal head shaping, with an increase in their length and width, apical defect of the acrosome, and nuclear lacunae devoid of chromatin, at the flagellum, mutant spermatozoa display mitochondrial sheath misassembly and coiling tail around the nucleus; when associated in trans with 447-C--I-588; may severely impair protein stability." evidence="4">
    <original>R</original>
    <variation>W</variation>
    <location>
        <position position="432"/>
    </location>
</feature>
<feature type="mutagenesis site" description="Knockin homozygous animals develop normally, however males are infertile and their spermatozoa show a substantial decrease in motility; spermatozoa from homozygous males exhibit several abnormalities, including abnormal head shaping, with an increase in their length and width, apical defect of the acrosome, and nuclear lacunae devoid of chromatin, at the flagellum, mutant spermatozoa display mitochondrial sheath misassembly and coiling tail around the nucleus; when associated in trans with W-432; may severely impair protein stability." evidence="4">
    <location>
        <begin position="447"/>
        <end position="588"/>
    </location>
</feature>
<comment type="function">
    <text evidence="4">Required for both nuclear and acrosomal shaping during spermiogenesis.</text>
</comment>
<comment type="subunit">
    <text evidence="1">Interacts with CYLC1; the interaction may be relevant for proper acrosome attachment to the nuclear envelope.</text>
</comment>
<comment type="subcellular location">
    <subcellularLocation>
        <location evidence="1">Cytoplasm</location>
        <location evidence="1">Cytoskeleton</location>
        <location evidence="1">Perinuclear theca</location>
        <location evidence="1">Calyx</location>
    </subcellularLocation>
</comment>
<comment type="tissue specificity">
    <text evidence="4">Expressed in testis and in spermatozoa.</text>
</comment>
<comment type="developmental stage">
    <text evidence="4">Expression in testis starts at 21 days postpartum.</text>
</comment>
<evidence type="ECO:0000250" key="1">
    <source>
        <dbReference type="UniProtKB" id="Q13939"/>
    </source>
</evidence>
<evidence type="ECO:0000250" key="2">
    <source>
        <dbReference type="UniProtKB" id="Q5XI58"/>
    </source>
</evidence>
<evidence type="ECO:0000255" key="3">
    <source>
        <dbReference type="PROSITE-ProRule" id="PRU00037"/>
    </source>
</evidence>
<evidence type="ECO:0000269" key="4">
    <source>
    </source>
</evidence>
<keyword id="KW-0963">Cytoplasm</keyword>
<keyword id="KW-0206">Cytoskeleton</keyword>
<keyword id="KW-0217">Developmental protein</keyword>
<keyword id="KW-0221">Differentiation</keyword>
<keyword id="KW-0880">Kelch repeat</keyword>
<keyword id="KW-0597">Phosphoprotein</keyword>
<keyword id="KW-1185">Reference proteome</keyword>
<keyword id="KW-0677">Repeat</keyword>
<keyword id="KW-0744">Spermatogenesis</keyword>
<sequence>MKLEFTEKNYNSFVLQNLNKQRKRKEYWDMALTVDHHVFFAHRNVLAAVSPLVKSLISSNDMKTTDELYITIDPNYLSPATVDQLLDYFYSGKVVISEQNVEELLRGAQYFNTPRLRIHCNDFLIKSIRRVNCLRYLFLAELFELKEVSDLAYSGIRDNFHFWASPEGSMHFMRCPPVIFGRLLRDENLHVLNEDQALSALISWVYFRKEEREKYFKKFFNYINLNAVSNKTLMFASNKLVGLENNSAHATLIESVLMDRKQERPCSLLSYQRKGALLDSVVILGGQKAHGKFNDGVFAYIIQENLWLKLSEMPYRAAALSATAAGRYIYISGGTTEQISGLKTAWRYDMDDNSWTKLPDLPIGLVFHTMVTCGGTVYSVGGSIAPRRYVSNIYRYDERKEAWCLAGKMSIPMDGTAVITKGDRNLYIVTGRCLVKGYISRVGVVDCFDTCTGEVVQCITFPIEFNHRPLLSFHQDNILRVHSHRQSVEINLQKIKANKSTTSVPLLPNSCPLDVSHAICSIGDSKVFVCGGVTTASDVQTKDYTINPNAYLLDQKIGEWQTLACPPEALDCPACCLAKLPCKILQRI</sequence>
<organism>
    <name type="scientific">Mus musculus</name>
    <name type="common">Mouse</name>
    <dbReference type="NCBI Taxonomy" id="10090"/>
    <lineage>
        <taxon>Eukaryota</taxon>
        <taxon>Metazoa</taxon>
        <taxon>Chordata</taxon>
        <taxon>Craniata</taxon>
        <taxon>Vertebrata</taxon>
        <taxon>Euteleostomi</taxon>
        <taxon>Mammalia</taxon>
        <taxon>Eutheria</taxon>
        <taxon>Euarchontoglires</taxon>
        <taxon>Glires</taxon>
        <taxon>Rodentia</taxon>
        <taxon>Myomorpha</taxon>
        <taxon>Muroidea</taxon>
        <taxon>Muridae</taxon>
        <taxon>Murinae</taxon>
        <taxon>Mus</taxon>
        <taxon>Mus</taxon>
    </lineage>
</organism>
<reference key="1">
    <citation type="journal article" date="2005" name="Science">
        <title>The transcriptional landscape of the mammalian genome.</title>
        <authorList>
            <person name="Carninci P."/>
            <person name="Kasukawa T."/>
            <person name="Katayama S."/>
            <person name="Gough J."/>
            <person name="Frith M.C."/>
            <person name="Maeda N."/>
            <person name="Oyama R."/>
            <person name="Ravasi T."/>
            <person name="Lenhard B."/>
            <person name="Wells C."/>
            <person name="Kodzius R."/>
            <person name="Shimokawa K."/>
            <person name="Bajic V.B."/>
            <person name="Brenner S.E."/>
            <person name="Batalov S."/>
            <person name="Forrest A.R."/>
            <person name="Zavolan M."/>
            <person name="Davis M.J."/>
            <person name="Wilming L.G."/>
            <person name="Aidinis V."/>
            <person name="Allen J.E."/>
            <person name="Ambesi-Impiombato A."/>
            <person name="Apweiler R."/>
            <person name="Aturaliya R.N."/>
            <person name="Bailey T.L."/>
            <person name="Bansal M."/>
            <person name="Baxter L."/>
            <person name="Beisel K.W."/>
            <person name="Bersano T."/>
            <person name="Bono H."/>
            <person name="Chalk A.M."/>
            <person name="Chiu K.P."/>
            <person name="Choudhary V."/>
            <person name="Christoffels A."/>
            <person name="Clutterbuck D.R."/>
            <person name="Crowe M.L."/>
            <person name="Dalla E."/>
            <person name="Dalrymple B.P."/>
            <person name="de Bono B."/>
            <person name="Della Gatta G."/>
            <person name="di Bernardo D."/>
            <person name="Down T."/>
            <person name="Engstrom P."/>
            <person name="Fagiolini M."/>
            <person name="Faulkner G."/>
            <person name="Fletcher C.F."/>
            <person name="Fukushima T."/>
            <person name="Furuno M."/>
            <person name="Futaki S."/>
            <person name="Gariboldi M."/>
            <person name="Georgii-Hemming P."/>
            <person name="Gingeras T.R."/>
            <person name="Gojobori T."/>
            <person name="Green R.E."/>
            <person name="Gustincich S."/>
            <person name="Harbers M."/>
            <person name="Hayashi Y."/>
            <person name="Hensch T.K."/>
            <person name="Hirokawa N."/>
            <person name="Hill D."/>
            <person name="Huminiecki L."/>
            <person name="Iacono M."/>
            <person name="Ikeo K."/>
            <person name="Iwama A."/>
            <person name="Ishikawa T."/>
            <person name="Jakt M."/>
            <person name="Kanapin A."/>
            <person name="Katoh M."/>
            <person name="Kawasawa Y."/>
            <person name="Kelso J."/>
            <person name="Kitamura H."/>
            <person name="Kitano H."/>
            <person name="Kollias G."/>
            <person name="Krishnan S.P."/>
            <person name="Kruger A."/>
            <person name="Kummerfeld S.K."/>
            <person name="Kurochkin I.V."/>
            <person name="Lareau L.F."/>
            <person name="Lazarevic D."/>
            <person name="Lipovich L."/>
            <person name="Liu J."/>
            <person name="Liuni S."/>
            <person name="McWilliam S."/>
            <person name="Madan Babu M."/>
            <person name="Madera M."/>
            <person name="Marchionni L."/>
            <person name="Matsuda H."/>
            <person name="Matsuzawa S."/>
            <person name="Miki H."/>
            <person name="Mignone F."/>
            <person name="Miyake S."/>
            <person name="Morris K."/>
            <person name="Mottagui-Tabar S."/>
            <person name="Mulder N."/>
            <person name="Nakano N."/>
            <person name="Nakauchi H."/>
            <person name="Ng P."/>
            <person name="Nilsson R."/>
            <person name="Nishiguchi S."/>
            <person name="Nishikawa S."/>
            <person name="Nori F."/>
            <person name="Ohara O."/>
            <person name="Okazaki Y."/>
            <person name="Orlando V."/>
            <person name="Pang K.C."/>
            <person name="Pavan W.J."/>
            <person name="Pavesi G."/>
            <person name="Pesole G."/>
            <person name="Petrovsky N."/>
            <person name="Piazza S."/>
            <person name="Reed J."/>
            <person name="Reid J.F."/>
            <person name="Ring B.Z."/>
            <person name="Ringwald M."/>
            <person name="Rost B."/>
            <person name="Ruan Y."/>
            <person name="Salzberg S.L."/>
            <person name="Sandelin A."/>
            <person name="Schneider C."/>
            <person name="Schoenbach C."/>
            <person name="Sekiguchi K."/>
            <person name="Semple C.A."/>
            <person name="Seno S."/>
            <person name="Sessa L."/>
            <person name="Sheng Y."/>
            <person name="Shibata Y."/>
            <person name="Shimada H."/>
            <person name="Shimada K."/>
            <person name="Silva D."/>
            <person name="Sinclair B."/>
            <person name="Sperling S."/>
            <person name="Stupka E."/>
            <person name="Sugiura K."/>
            <person name="Sultana R."/>
            <person name="Takenaka Y."/>
            <person name="Taki K."/>
            <person name="Tammoja K."/>
            <person name="Tan S.L."/>
            <person name="Tang S."/>
            <person name="Taylor M.S."/>
            <person name="Tegner J."/>
            <person name="Teichmann S.A."/>
            <person name="Ueda H.R."/>
            <person name="van Nimwegen E."/>
            <person name="Verardo R."/>
            <person name="Wei C.L."/>
            <person name="Yagi K."/>
            <person name="Yamanishi H."/>
            <person name="Zabarovsky E."/>
            <person name="Zhu S."/>
            <person name="Zimmer A."/>
            <person name="Hide W."/>
            <person name="Bult C."/>
            <person name="Grimmond S.M."/>
            <person name="Teasdale R.D."/>
            <person name="Liu E.T."/>
            <person name="Brusic V."/>
            <person name="Quackenbush J."/>
            <person name="Wahlestedt C."/>
            <person name="Mattick J.S."/>
            <person name="Hume D.A."/>
            <person name="Kai C."/>
            <person name="Sasaki D."/>
            <person name="Tomaru Y."/>
            <person name="Fukuda S."/>
            <person name="Kanamori-Katayama M."/>
            <person name="Suzuki M."/>
            <person name="Aoki J."/>
            <person name="Arakawa T."/>
            <person name="Iida J."/>
            <person name="Imamura K."/>
            <person name="Itoh M."/>
            <person name="Kato T."/>
            <person name="Kawaji H."/>
            <person name="Kawagashira N."/>
            <person name="Kawashima T."/>
            <person name="Kojima M."/>
            <person name="Kondo S."/>
            <person name="Konno H."/>
            <person name="Nakano K."/>
            <person name="Ninomiya N."/>
            <person name="Nishio T."/>
            <person name="Okada M."/>
            <person name="Plessy C."/>
            <person name="Shibata K."/>
            <person name="Shiraki T."/>
            <person name="Suzuki S."/>
            <person name="Tagami M."/>
            <person name="Waki K."/>
            <person name="Watahiki A."/>
            <person name="Okamura-Oho Y."/>
            <person name="Suzuki H."/>
            <person name="Kawai J."/>
            <person name="Hayashizaki Y."/>
        </authorList>
    </citation>
    <scope>NUCLEOTIDE SEQUENCE [LARGE SCALE MRNA]</scope>
    <source>
        <strain>C57BL/6J</strain>
        <tissue>Testis</tissue>
    </source>
</reference>
<reference key="2">
    <citation type="journal article" date="2009" name="PLoS Biol.">
        <title>Lineage-specific biology revealed by a finished genome assembly of the mouse.</title>
        <authorList>
            <person name="Church D.M."/>
            <person name="Goodstadt L."/>
            <person name="Hillier L.W."/>
            <person name="Zody M.C."/>
            <person name="Goldstein S."/>
            <person name="She X."/>
            <person name="Bult C.J."/>
            <person name="Agarwala R."/>
            <person name="Cherry J.L."/>
            <person name="DiCuccio M."/>
            <person name="Hlavina W."/>
            <person name="Kapustin Y."/>
            <person name="Meric P."/>
            <person name="Maglott D."/>
            <person name="Birtle Z."/>
            <person name="Marques A.C."/>
            <person name="Graves T."/>
            <person name="Zhou S."/>
            <person name="Teague B."/>
            <person name="Potamousis K."/>
            <person name="Churas C."/>
            <person name="Place M."/>
            <person name="Herschleb J."/>
            <person name="Runnheim R."/>
            <person name="Forrest D."/>
            <person name="Amos-Landgraf J."/>
            <person name="Schwartz D.C."/>
            <person name="Cheng Z."/>
            <person name="Lindblad-Toh K."/>
            <person name="Eichler E.E."/>
            <person name="Ponting C.P."/>
        </authorList>
    </citation>
    <scope>NUCLEOTIDE SEQUENCE [LARGE SCALE GENOMIC DNA]</scope>
    <source>
        <strain>C57BL/6J</strain>
    </source>
</reference>
<reference key="3">
    <citation type="journal article" date="2010" name="Cell">
        <title>A tissue-specific atlas of mouse protein phosphorylation and expression.</title>
        <authorList>
            <person name="Huttlin E.L."/>
            <person name="Jedrychowski M.P."/>
            <person name="Elias J.E."/>
            <person name="Goswami T."/>
            <person name="Rad R."/>
            <person name="Beausoleil S.A."/>
            <person name="Villen J."/>
            <person name="Haas W."/>
            <person name="Sowa M.E."/>
            <person name="Gygi S.P."/>
        </authorList>
    </citation>
    <scope>IDENTIFICATION BY MASS SPECTROMETRY [LARGE SCALE ANALYSIS]</scope>
    <source>
        <tissue>Testis</tissue>
    </source>
</reference>
<reference key="4">
    <citation type="journal article" date="2022" name="Sci. Bull.">
        <title>Mutations in CCIN cause teratozoospermia and male infertility.</title>
        <authorList>
            <person name="Fan Y."/>
            <person name="Huang C."/>
            <person name="Chen J."/>
            <person name="Chen Y."/>
            <person name="Wang Y."/>
            <person name="Yan Z."/>
            <person name="Yu W."/>
            <person name="Wu H."/>
            <person name="Yang Y."/>
            <person name="Nie L."/>
            <person name="Huang S."/>
            <person name="Wang F."/>
            <person name="Wang H."/>
            <person name="Hua Y."/>
            <person name="Lyu Q."/>
            <person name="Kuang Y."/>
            <person name="Lei M."/>
        </authorList>
    </citation>
    <scope>FUNCTION</scope>
    <scope>TISSUE SPECIFICITY</scope>
    <scope>DEVELOPMENTAL STAGE</scope>
    <scope>MUTAGENESIS OF HIS-42; ARG-432 AND 447-CYS--ILE-588</scope>
</reference>
<proteinExistence type="evidence at protein level"/>
<protein>
    <recommendedName>
        <fullName>Calicin</fullName>
    </recommendedName>
</protein>
<dbReference type="EMBL" id="AK030197">
    <property type="protein sequence ID" value="BAC26835.1"/>
    <property type="molecule type" value="mRNA"/>
</dbReference>
<dbReference type="EMBL" id="AL732563">
    <property type="status" value="NOT_ANNOTATED_CDS"/>
    <property type="molecule type" value="Genomic_DNA"/>
</dbReference>
<dbReference type="CCDS" id="CCDS18118.1"/>
<dbReference type="RefSeq" id="NP_001002787.1">
    <property type="nucleotide sequence ID" value="NM_001002787.2"/>
</dbReference>
<dbReference type="SMR" id="Q8CDE2"/>
<dbReference type="BioGRID" id="243037">
    <property type="interactions" value="1"/>
</dbReference>
<dbReference type="FunCoup" id="Q8CDE2">
    <property type="interactions" value="42"/>
</dbReference>
<dbReference type="STRING" id="10090.ENSMUSP00000092725"/>
<dbReference type="iPTMnet" id="Q8CDE2"/>
<dbReference type="PhosphoSitePlus" id="Q8CDE2"/>
<dbReference type="PaxDb" id="10090-ENSMUSP00000092725"/>
<dbReference type="ProteomicsDB" id="265504"/>
<dbReference type="Antibodypedia" id="11871">
    <property type="antibodies" value="131 antibodies from 20 providers"/>
</dbReference>
<dbReference type="DNASU" id="442829"/>
<dbReference type="Ensembl" id="ENSMUST00000095107.3">
    <property type="protein sequence ID" value="ENSMUSP00000092725.2"/>
    <property type="gene ID" value="ENSMUSG00000070999.3"/>
</dbReference>
<dbReference type="GeneID" id="442829"/>
<dbReference type="KEGG" id="mmu:442829"/>
<dbReference type="UCSC" id="uc008srg.1">
    <property type="organism name" value="mouse"/>
</dbReference>
<dbReference type="AGR" id="MGI:3045316"/>
<dbReference type="CTD" id="881"/>
<dbReference type="MGI" id="MGI:3045316">
    <property type="gene designation" value="Ccin"/>
</dbReference>
<dbReference type="VEuPathDB" id="HostDB:ENSMUSG00000070999"/>
<dbReference type="eggNOG" id="KOG4441">
    <property type="taxonomic scope" value="Eukaryota"/>
</dbReference>
<dbReference type="GeneTree" id="ENSGT00940000162268"/>
<dbReference type="HOGENOM" id="CLU_466589_0_0_1"/>
<dbReference type="InParanoid" id="Q8CDE2"/>
<dbReference type="OMA" id="MPYKAAA"/>
<dbReference type="OrthoDB" id="9978265at2759"/>
<dbReference type="PhylomeDB" id="Q8CDE2"/>
<dbReference type="TreeFam" id="TF331981"/>
<dbReference type="BioGRID-ORCS" id="442829">
    <property type="hits" value="1 hit in 77 CRISPR screens"/>
</dbReference>
<dbReference type="PRO" id="PR:Q8CDE2"/>
<dbReference type="Proteomes" id="UP000000589">
    <property type="component" value="Chromosome 4"/>
</dbReference>
<dbReference type="RNAct" id="Q8CDE2">
    <property type="molecule type" value="protein"/>
</dbReference>
<dbReference type="Bgee" id="ENSMUSG00000070999">
    <property type="expression patterns" value="Expressed in seminiferous tubule of testis and 7 other cell types or tissues"/>
</dbReference>
<dbReference type="ExpressionAtlas" id="Q8CDE2">
    <property type="expression patterns" value="baseline and differential"/>
</dbReference>
<dbReference type="GO" id="GO:0033150">
    <property type="term" value="C:cytoskeletal calyx"/>
    <property type="evidence" value="ECO:0000314"/>
    <property type="project" value="UniProtKB"/>
</dbReference>
<dbReference type="GO" id="GO:0005856">
    <property type="term" value="C:cytoskeleton"/>
    <property type="evidence" value="ECO:0000266"/>
    <property type="project" value="MGI"/>
</dbReference>
<dbReference type="GO" id="GO:0030154">
    <property type="term" value="P:cell differentiation"/>
    <property type="evidence" value="ECO:0007669"/>
    <property type="project" value="UniProtKB-KW"/>
</dbReference>
<dbReference type="GO" id="GO:0007283">
    <property type="term" value="P:spermatogenesis"/>
    <property type="evidence" value="ECO:0000315"/>
    <property type="project" value="UniProtKB"/>
</dbReference>
<dbReference type="CDD" id="cd18307">
    <property type="entry name" value="BTB_POZ_calicin"/>
    <property type="match status" value="1"/>
</dbReference>
<dbReference type="FunFam" id="1.25.40.420:FF:000022">
    <property type="entry name" value="Calicin"/>
    <property type="match status" value="1"/>
</dbReference>
<dbReference type="FunFam" id="2.120.10.80:FF:000126">
    <property type="entry name" value="Calicin"/>
    <property type="match status" value="1"/>
</dbReference>
<dbReference type="FunFam" id="3.30.710.10:FF:000125">
    <property type="entry name" value="Calicin"/>
    <property type="match status" value="1"/>
</dbReference>
<dbReference type="Gene3D" id="1.25.40.420">
    <property type="match status" value="1"/>
</dbReference>
<dbReference type="Gene3D" id="2.120.10.80">
    <property type="entry name" value="Kelch-type beta propeller"/>
    <property type="match status" value="1"/>
</dbReference>
<dbReference type="Gene3D" id="3.30.710.10">
    <property type="entry name" value="Potassium Channel Kv1.1, Chain A"/>
    <property type="match status" value="1"/>
</dbReference>
<dbReference type="InterPro" id="IPR011705">
    <property type="entry name" value="BACK"/>
</dbReference>
<dbReference type="InterPro" id="IPR000210">
    <property type="entry name" value="BTB/POZ_dom"/>
</dbReference>
<dbReference type="InterPro" id="IPR048070">
    <property type="entry name" value="Calicin_BTB_POZ"/>
</dbReference>
<dbReference type="InterPro" id="IPR015915">
    <property type="entry name" value="Kelch-typ_b-propeller"/>
</dbReference>
<dbReference type="InterPro" id="IPR006652">
    <property type="entry name" value="Kelch_1"/>
</dbReference>
<dbReference type="InterPro" id="IPR011333">
    <property type="entry name" value="SKP1/BTB/POZ_sf"/>
</dbReference>
<dbReference type="PANTHER" id="PTHR45632">
    <property type="entry name" value="LD33804P"/>
    <property type="match status" value="1"/>
</dbReference>
<dbReference type="Pfam" id="PF07707">
    <property type="entry name" value="BACK"/>
    <property type="match status" value="1"/>
</dbReference>
<dbReference type="Pfam" id="PF00651">
    <property type="entry name" value="BTB"/>
    <property type="match status" value="1"/>
</dbReference>
<dbReference type="Pfam" id="PF01344">
    <property type="entry name" value="Kelch_1"/>
    <property type="match status" value="1"/>
</dbReference>
<dbReference type="Pfam" id="PF13964">
    <property type="entry name" value="Kelch_6"/>
    <property type="match status" value="1"/>
</dbReference>
<dbReference type="SMART" id="SM00875">
    <property type="entry name" value="BACK"/>
    <property type="match status" value="1"/>
</dbReference>
<dbReference type="SMART" id="SM00225">
    <property type="entry name" value="BTB"/>
    <property type="match status" value="1"/>
</dbReference>
<dbReference type="SMART" id="SM00612">
    <property type="entry name" value="Kelch"/>
    <property type="match status" value="3"/>
</dbReference>
<dbReference type="SUPFAM" id="SSF117281">
    <property type="entry name" value="Kelch motif"/>
    <property type="match status" value="1"/>
</dbReference>
<dbReference type="SUPFAM" id="SSF54695">
    <property type="entry name" value="POZ domain"/>
    <property type="match status" value="1"/>
</dbReference>
<dbReference type="PROSITE" id="PS50097">
    <property type="entry name" value="BTB"/>
    <property type="match status" value="1"/>
</dbReference>
<accession>Q8CDE2</accession>